<organism>
    <name type="scientific">Arabidopsis thaliana</name>
    <name type="common">Mouse-ear cress</name>
    <dbReference type="NCBI Taxonomy" id="3702"/>
    <lineage>
        <taxon>Eukaryota</taxon>
        <taxon>Viridiplantae</taxon>
        <taxon>Streptophyta</taxon>
        <taxon>Embryophyta</taxon>
        <taxon>Tracheophyta</taxon>
        <taxon>Spermatophyta</taxon>
        <taxon>Magnoliopsida</taxon>
        <taxon>eudicotyledons</taxon>
        <taxon>Gunneridae</taxon>
        <taxon>Pentapetalae</taxon>
        <taxon>rosids</taxon>
        <taxon>malvids</taxon>
        <taxon>Brassicales</taxon>
        <taxon>Brassicaceae</taxon>
        <taxon>Camelineae</taxon>
        <taxon>Arabidopsis</taxon>
    </lineage>
</organism>
<reference key="1">
    <citation type="journal article" date="2000" name="Nature">
        <title>Sequence and analysis of chromosome 1 of the plant Arabidopsis thaliana.</title>
        <authorList>
            <person name="Theologis A."/>
            <person name="Ecker J.R."/>
            <person name="Palm C.J."/>
            <person name="Federspiel N.A."/>
            <person name="Kaul S."/>
            <person name="White O."/>
            <person name="Alonso J."/>
            <person name="Altafi H."/>
            <person name="Araujo R."/>
            <person name="Bowman C.L."/>
            <person name="Brooks S.Y."/>
            <person name="Buehler E."/>
            <person name="Chan A."/>
            <person name="Chao Q."/>
            <person name="Chen H."/>
            <person name="Cheuk R.F."/>
            <person name="Chin C.W."/>
            <person name="Chung M.K."/>
            <person name="Conn L."/>
            <person name="Conway A.B."/>
            <person name="Conway A.R."/>
            <person name="Creasy T.H."/>
            <person name="Dewar K."/>
            <person name="Dunn P."/>
            <person name="Etgu P."/>
            <person name="Feldblyum T.V."/>
            <person name="Feng J.-D."/>
            <person name="Fong B."/>
            <person name="Fujii C.Y."/>
            <person name="Gill J.E."/>
            <person name="Goldsmith A.D."/>
            <person name="Haas B."/>
            <person name="Hansen N.F."/>
            <person name="Hughes B."/>
            <person name="Huizar L."/>
            <person name="Hunter J.L."/>
            <person name="Jenkins J."/>
            <person name="Johnson-Hopson C."/>
            <person name="Khan S."/>
            <person name="Khaykin E."/>
            <person name="Kim C.J."/>
            <person name="Koo H.L."/>
            <person name="Kremenetskaia I."/>
            <person name="Kurtz D.B."/>
            <person name="Kwan A."/>
            <person name="Lam B."/>
            <person name="Langin-Hooper S."/>
            <person name="Lee A."/>
            <person name="Lee J.M."/>
            <person name="Lenz C.A."/>
            <person name="Li J.H."/>
            <person name="Li Y.-P."/>
            <person name="Lin X."/>
            <person name="Liu S.X."/>
            <person name="Liu Z.A."/>
            <person name="Luros J.S."/>
            <person name="Maiti R."/>
            <person name="Marziali A."/>
            <person name="Militscher J."/>
            <person name="Miranda M."/>
            <person name="Nguyen M."/>
            <person name="Nierman W.C."/>
            <person name="Osborne B.I."/>
            <person name="Pai G."/>
            <person name="Peterson J."/>
            <person name="Pham P.K."/>
            <person name="Rizzo M."/>
            <person name="Rooney T."/>
            <person name="Rowley D."/>
            <person name="Sakano H."/>
            <person name="Salzberg S.L."/>
            <person name="Schwartz J.R."/>
            <person name="Shinn P."/>
            <person name="Southwick A.M."/>
            <person name="Sun H."/>
            <person name="Tallon L.J."/>
            <person name="Tambunga G."/>
            <person name="Toriumi M.J."/>
            <person name="Town C.D."/>
            <person name="Utterback T."/>
            <person name="Van Aken S."/>
            <person name="Vaysberg M."/>
            <person name="Vysotskaia V.S."/>
            <person name="Walker M."/>
            <person name="Wu D."/>
            <person name="Yu G."/>
            <person name="Fraser C.M."/>
            <person name="Venter J.C."/>
            <person name="Davis R.W."/>
        </authorList>
    </citation>
    <scope>NUCLEOTIDE SEQUENCE [LARGE SCALE GENOMIC DNA]</scope>
    <source>
        <strain>cv. Columbia</strain>
    </source>
</reference>
<reference key="2">
    <citation type="journal article" date="2017" name="Plant J.">
        <title>Araport11: a complete reannotation of the Arabidopsis thaliana reference genome.</title>
        <authorList>
            <person name="Cheng C.Y."/>
            <person name="Krishnakumar V."/>
            <person name="Chan A.P."/>
            <person name="Thibaud-Nissen F."/>
            <person name="Schobel S."/>
            <person name="Town C.D."/>
        </authorList>
    </citation>
    <scope>GENOME REANNOTATION</scope>
    <source>
        <strain>cv. Columbia</strain>
    </source>
</reference>
<reference key="3">
    <citation type="submission" date="2006-07" db="EMBL/GenBank/DDBJ databases">
        <title>Large-scale analysis of RIKEN Arabidopsis full-length (RAFL) cDNAs.</title>
        <authorList>
            <person name="Totoki Y."/>
            <person name="Seki M."/>
            <person name="Ishida J."/>
            <person name="Nakajima M."/>
            <person name="Enju A."/>
            <person name="Kamiya A."/>
            <person name="Narusaka M."/>
            <person name="Shin-i T."/>
            <person name="Nakagawa M."/>
            <person name="Sakamoto N."/>
            <person name="Oishi K."/>
            <person name="Kohara Y."/>
            <person name="Kobayashi M."/>
            <person name="Toyoda A."/>
            <person name="Sakaki Y."/>
            <person name="Sakurai T."/>
            <person name="Iida K."/>
            <person name="Akiyama K."/>
            <person name="Satou M."/>
            <person name="Toyoda T."/>
            <person name="Konagaya A."/>
            <person name="Carninci P."/>
            <person name="Kawai J."/>
            <person name="Hayashizaki Y."/>
            <person name="Shinozaki K."/>
        </authorList>
    </citation>
    <scope>NUCLEOTIDE SEQUENCE [LARGE SCALE MRNA]</scope>
    <source>
        <strain>cv. Columbia</strain>
    </source>
</reference>
<reference key="4">
    <citation type="submission" date="2004-06" db="EMBL/GenBank/DDBJ databases">
        <authorList>
            <person name="Cheuk R.F."/>
            <person name="Chen H."/>
            <person name="Kim C.J."/>
            <person name="Shinn P."/>
            <person name="Ecker J.R."/>
        </authorList>
    </citation>
    <scope>NUCLEOTIDE SEQUENCE [LARGE SCALE MRNA]</scope>
    <source>
        <strain>cv. Columbia</strain>
    </source>
</reference>
<reference key="5">
    <citation type="journal article" date="2006" name="Plant Physiol.">
        <title>Genome-wide analysis of the ERF gene family in Arabidopsis and rice.</title>
        <authorList>
            <person name="Nakano T."/>
            <person name="Suzuki K."/>
            <person name="Fujimura T."/>
            <person name="Shinshi H."/>
        </authorList>
    </citation>
    <scope>GENE FAMILY</scope>
    <scope>NOMENCLATURE</scope>
</reference>
<reference key="6">
    <citation type="journal article" date="2008" name="Plant Physiol.">
        <title>The AP2/ERF domain transcription factor ORA59 integrates jasmonic acid and ethylene signals in plant defense.</title>
        <authorList>
            <person name="Pre M."/>
            <person name="Atallah M."/>
            <person name="Champion A."/>
            <person name="De Vos M."/>
            <person name="Pieterse C.M.J."/>
            <person name="Memelink J."/>
        </authorList>
    </citation>
    <scope>FUNCTION</scope>
</reference>
<proteinExistence type="evidence at transcript level"/>
<feature type="chain" id="PRO_0000290413" description="Ethylene-responsive transcription factor ERF094">
    <location>
        <begin position="1"/>
        <end position="244"/>
    </location>
</feature>
<feature type="DNA-binding region" description="AP2/ERF" evidence="1">
    <location>
        <begin position="81"/>
        <end position="139"/>
    </location>
</feature>
<feature type="region of interest" description="Disordered" evidence="2">
    <location>
        <begin position="1"/>
        <end position="22"/>
    </location>
</feature>
<feature type="region of interest" description="Disordered" evidence="2">
    <location>
        <begin position="166"/>
        <end position="219"/>
    </location>
</feature>
<feature type="compositionally biased region" description="Low complexity" evidence="2">
    <location>
        <begin position="8"/>
        <end position="22"/>
    </location>
</feature>
<feature type="compositionally biased region" description="Basic residues" evidence="2">
    <location>
        <begin position="166"/>
        <end position="181"/>
    </location>
</feature>
<feature type="compositionally biased region" description="Low complexity" evidence="2">
    <location>
        <begin position="182"/>
        <end position="208"/>
    </location>
</feature>
<dbReference type="EMBL" id="AC025290">
    <property type="protein sequence ID" value="AAF80213.1"/>
    <property type="molecule type" value="Genomic_DNA"/>
</dbReference>
<dbReference type="EMBL" id="CP002684">
    <property type="protein sequence ID" value="AEE27952.1"/>
    <property type="molecule type" value="Genomic_DNA"/>
</dbReference>
<dbReference type="EMBL" id="AK228085">
    <property type="protein sequence ID" value="BAF00044.1"/>
    <property type="molecule type" value="mRNA"/>
</dbReference>
<dbReference type="EMBL" id="BT011001">
    <property type="protein sequence ID" value="AAR25637.1"/>
    <property type="molecule type" value="mRNA"/>
</dbReference>
<dbReference type="EMBL" id="BT014958">
    <property type="protein sequence ID" value="AAT47809.1"/>
    <property type="molecule type" value="mRNA"/>
</dbReference>
<dbReference type="PIR" id="B86197">
    <property type="entry name" value="B86197"/>
</dbReference>
<dbReference type="RefSeq" id="NP_172106.1">
    <property type="nucleotide sequence ID" value="NM_100497.3"/>
</dbReference>
<dbReference type="SMR" id="Q9LND1"/>
<dbReference type="BioGRID" id="22367">
    <property type="interactions" value="3"/>
</dbReference>
<dbReference type="STRING" id="3702.Q9LND1"/>
<dbReference type="PaxDb" id="3702-AT1G06160.1"/>
<dbReference type="ProteomicsDB" id="220635"/>
<dbReference type="EnsemblPlants" id="AT1G06160.1">
    <property type="protein sequence ID" value="AT1G06160.1"/>
    <property type="gene ID" value="AT1G06160"/>
</dbReference>
<dbReference type="GeneID" id="837125"/>
<dbReference type="Gramene" id="AT1G06160.1">
    <property type="protein sequence ID" value="AT1G06160.1"/>
    <property type="gene ID" value="AT1G06160"/>
</dbReference>
<dbReference type="KEGG" id="ath:AT1G06160"/>
<dbReference type="Araport" id="AT1G06160"/>
<dbReference type="TAIR" id="AT1G06160">
    <property type="gene designation" value="ORA59"/>
</dbReference>
<dbReference type="eggNOG" id="ENOG502RBAX">
    <property type="taxonomic scope" value="Eukaryota"/>
</dbReference>
<dbReference type="HOGENOM" id="CLU_058713_1_1_1"/>
<dbReference type="InParanoid" id="Q9LND1"/>
<dbReference type="OMA" id="FLHQSFD"/>
<dbReference type="PhylomeDB" id="Q9LND1"/>
<dbReference type="PRO" id="PR:Q9LND1"/>
<dbReference type="Proteomes" id="UP000006548">
    <property type="component" value="Chromosome 1"/>
</dbReference>
<dbReference type="ExpressionAtlas" id="Q9LND1">
    <property type="expression patterns" value="baseline and differential"/>
</dbReference>
<dbReference type="GO" id="GO:0005634">
    <property type="term" value="C:nucleus"/>
    <property type="evidence" value="ECO:0007669"/>
    <property type="project" value="UniProtKB-SubCell"/>
</dbReference>
<dbReference type="GO" id="GO:0003677">
    <property type="term" value="F:DNA binding"/>
    <property type="evidence" value="ECO:0007669"/>
    <property type="project" value="UniProtKB-KW"/>
</dbReference>
<dbReference type="GO" id="GO:0003700">
    <property type="term" value="F:DNA-binding transcription factor activity"/>
    <property type="evidence" value="ECO:0000250"/>
    <property type="project" value="TAIR"/>
</dbReference>
<dbReference type="GO" id="GO:0009873">
    <property type="term" value="P:ethylene-activated signaling pathway"/>
    <property type="evidence" value="ECO:0000304"/>
    <property type="project" value="TAIR"/>
</dbReference>
<dbReference type="GO" id="GO:0009861">
    <property type="term" value="P:jasmonic acid and ethylene-dependent systemic resistance"/>
    <property type="evidence" value="ECO:0000315"/>
    <property type="project" value="TAIR"/>
</dbReference>
<dbReference type="GO" id="GO:0009723">
    <property type="term" value="P:response to ethylene"/>
    <property type="evidence" value="ECO:0000270"/>
    <property type="project" value="TAIR"/>
</dbReference>
<dbReference type="GO" id="GO:0009753">
    <property type="term" value="P:response to jasmonic acid"/>
    <property type="evidence" value="ECO:0000270"/>
    <property type="project" value="TAIR"/>
</dbReference>
<dbReference type="CDD" id="cd00018">
    <property type="entry name" value="AP2"/>
    <property type="match status" value="1"/>
</dbReference>
<dbReference type="FunFam" id="3.30.730.10:FF:000001">
    <property type="entry name" value="Ethylene-responsive transcription factor 2"/>
    <property type="match status" value="1"/>
</dbReference>
<dbReference type="Gene3D" id="3.30.730.10">
    <property type="entry name" value="AP2/ERF domain"/>
    <property type="match status" value="1"/>
</dbReference>
<dbReference type="InterPro" id="IPR001471">
    <property type="entry name" value="AP2/ERF_dom"/>
</dbReference>
<dbReference type="InterPro" id="IPR036955">
    <property type="entry name" value="AP2/ERF_dom_sf"/>
</dbReference>
<dbReference type="InterPro" id="IPR016177">
    <property type="entry name" value="DNA-bd_dom_sf"/>
</dbReference>
<dbReference type="InterPro" id="IPR044808">
    <property type="entry name" value="ERF_plant"/>
</dbReference>
<dbReference type="PANTHER" id="PTHR31190">
    <property type="entry name" value="DNA-BINDING DOMAIN"/>
    <property type="match status" value="1"/>
</dbReference>
<dbReference type="PANTHER" id="PTHR31190:SF314">
    <property type="entry name" value="ETHYLENE-RESPONSIVE TRANSCRIPTION FACTOR ERF094"/>
    <property type="match status" value="1"/>
</dbReference>
<dbReference type="Pfam" id="PF00847">
    <property type="entry name" value="AP2"/>
    <property type="match status" value="1"/>
</dbReference>
<dbReference type="PRINTS" id="PR00367">
    <property type="entry name" value="ETHRSPELEMNT"/>
</dbReference>
<dbReference type="SMART" id="SM00380">
    <property type="entry name" value="AP2"/>
    <property type="match status" value="1"/>
</dbReference>
<dbReference type="SUPFAM" id="SSF54171">
    <property type="entry name" value="DNA-binding domain"/>
    <property type="match status" value="1"/>
</dbReference>
<dbReference type="PROSITE" id="PS51032">
    <property type="entry name" value="AP2_ERF"/>
    <property type="match status" value="1"/>
</dbReference>
<comment type="function">
    <text evidence="3">Probably acts as a transcriptional activator. Binds to the GCC-box pathogenesis-related promoter element. May be involved in the regulation of gene expression by stress factors and by components of stress signal transduction pathways. Acts as an essential integrator of the JA and ethylene signal transduction pathways. Activates the expression of the PDF1.2A gene.</text>
</comment>
<comment type="subcellular location">
    <subcellularLocation>
        <location evidence="4">Nucleus</location>
    </subcellularLocation>
</comment>
<comment type="similarity">
    <text evidence="4">Belongs to the AP2/ERF transcription factor family. ERF subfamily.</text>
</comment>
<name>ERF94_ARATH</name>
<protein>
    <recommendedName>
        <fullName>Ethylene-responsive transcription factor ERF094</fullName>
    </recommendedName>
    <alternativeName>
        <fullName>Protein OCTADECANOID-RESPONSIVE ARABIDOPSIS AP2/ERF 59</fullName>
    </alternativeName>
</protein>
<sequence length="244" mass="27090">MEYQTNFLSGEFSPENSSSSSWSSQESFLWEESFLHQSFDQSFLLSSPTDNYCDDFFAFESSIIKEEGKEATVAAEEEEKSYRGVRKRPWGKFAAEIRDSTRKGIRVWLGTFDTAEAAALAYDQAAFALKGSLAVLNFPADVVEESLRKMENVNLNDGESPVIALKRKHSMRNRPRGKKKSSSSSTLTSSPSSSSSYSSSSSSSSLSSRSRKQSVVMTQESNTTLVVLEDLGAEYLEELMRSCS</sequence>
<evidence type="ECO:0000255" key="1">
    <source>
        <dbReference type="PROSITE-ProRule" id="PRU00366"/>
    </source>
</evidence>
<evidence type="ECO:0000256" key="2">
    <source>
        <dbReference type="SAM" id="MobiDB-lite"/>
    </source>
</evidence>
<evidence type="ECO:0000269" key="3">
    <source>
    </source>
</evidence>
<evidence type="ECO:0000305" key="4"/>
<keyword id="KW-0010">Activator</keyword>
<keyword id="KW-0238">DNA-binding</keyword>
<keyword id="KW-0936">Ethylene signaling pathway</keyword>
<keyword id="KW-0539">Nucleus</keyword>
<keyword id="KW-1185">Reference proteome</keyword>
<keyword id="KW-0804">Transcription</keyword>
<keyword id="KW-0805">Transcription regulation</keyword>
<gene>
    <name type="primary">ERF094</name>
    <name type="synonym">ORA59</name>
    <name type="ordered locus">At1g06160</name>
    <name type="ORF">F9P14.2</name>
</gene>
<accession>Q9LND1</accession>